<name>NADK_CAUVC</name>
<keyword id="KW-0067">ATP-binding</keyword>
<keyword id="KW-0963">Cytoplasm</keyword>
<keyword id="KW-0418">Kinase</keyword>
<keyword id="KW-0520">NAD</keyword>
<keyword id="KW-0521">NADP</keyword>
<keyword id="KW-0547">Nucleotide-binding</keyword>
<keyword id="KW-1185">Reference proteome</keyword>
<keyword id="KW-0808">Transferase</keyword>
<comment type="function">
    <text evidence="1">Involved in the regulation of the intracellular balance of NAD and NADP, and is a key enzyme in the biosynthesis of NADP. Catalyzes specifically the phosphorylation on 2'-hydroxyl of the adenosine moiety of NAD to yield NADP.</text>
</comment>
<comment type="catalytic activity">
    <reaction evidence="1">
        <text>NAD(+) + ATP = ADP + NADP(+) + H(+)</text>
        <dbReference type="Rhea" id="RHEA:18629"/>
        <dbReference type="ChEBI" id="CHEBI:15378"/>
        <dbReference type="ChEBI" id="CHEBI:30616"/>
        <dbReference type="ChEBI" id="CHEBI:57540"/>
        <dbReference type="ChEBI" id="CHEBI:58349"/>
        <dbReference type="ChEBI" id="CHEBI:456216"/>
        <dbReference type="EC" id="2.7.1.23"/>
    </reaction>
</comment>
<comment type="cofactor">
    <cofactor evidence="1">
        <name>a divalent metal cation</name>
        <dbReference type="ChEBI" id="CHEBI:60240"/>
    </cofactor>
</comment>
<comment type="subcellular location">
    <subcellularLocation>
        <location evidence="1">Cytoplasm</location>
    </subcellularLocation>
</comment>
<comment type="similarity">
    <text evidence="1">Belongs to the NAD kinase family.</text>
</comment>
<evidence type="ECO:0000255" key="1">
    <source>
        <dbReference type="HAMAP-Rule" id="MF_00361"/>
    </source>
</evidence>
<proteinExistence type="inferred from homology"/>
<sequence>MYQPQPFVTRLAFKCSDRPEAQEARERLAARYGDVGPENAQVIVALGGDGFMLESLHEAIASQTPIYGMNRGSVGFLMNEYSEDGLLERINAAERAVIHPLAMVAIDARRTQHRALAINEVSLLRQTRQTAKLRISIDGKVRMGELVCDGALLATPAGSTAYNLSAHGPIIPIDGRVLALTPISAFRPRRWRGALLPQSARVTFEILEADKRPVSAVADNFEVRDAMEVHISEDRGTSLAMLFDAGRSLEERVLAEQFSA</sequence>
<gene>
    <name evidence="1" type="primary">nadK</name>
    <name type="ordered locus">CC_1221</name>
</gene>
<accession>P58056</accession>
<feature type="chain" id="PRO_0000120609" description="NAD kinase">
    <location>
        <begin position="1"/>
        <end position="260"/>
    </location>
</feature>
<feature type="active site" description="Proton acceptor" evidence="1">
    <location>
        <position position="49"/>
    </location>
</feature>
<feature type="binding site" evidence="1">
    <location>
        <begin position="49"/>
        <end position="50"/>
    </location>
    <ligand>
        <name>NAD(+)</name>
        <dbReference type="ChEBI" id="CHEBI:57540"/>
    </ligand>
</feature>
<feature type="binding site" evidence="1">
    <location>
        <begin position="119"/>
        <end position="120"/>
    </location>
    <ligand>
        <name>NAD(+)</name>
        <dbReference type="ChEBI" id="CHEBI:57540"/>
    </ligand>
</feature>
<feature type="binding site" evidence="1">
    <location>
        <position position="149"/>
    </location>
    <ligand>
        <name>NAD(+)</name>
        <dbReference type="ChEBI" id="CHEBI:57540"/>
    </ligand>
</feature>
<feature type="binding site" evidence="1">
    <location>
        <position position="157"/>
    </location>
    <ligand>
        <name>NAD(+)</name>
        <dbReference type="ChEBI" id="CHEBI:57540"/>
    </ligand>
</feature>
<feature type="binding site" evidence="1">
    <location>
        <begin position="160"/>
        <end position="165"/>
    </location>
    <ligand>
        <name>NAD(+)</name>
        <dbReference type="ChEBI" id="CHEBI:57540"/>
    </ligand>
</feature>
<dbReference type="EC" id="2.7.1.23" evidence="1"/>
<dbReference type="EMBL" id="AE005673">
    <property type="protein sequence ID" value="AAK23203.1"/>
    <property type="molecule type" value="Genomic_DNA"/>
</dbReference>
<dbReference type="PIR" id="G87400">
    <property type="entry name" value="G87400"/>
</dbReference>
<dbReference type="RefSeq" id="NP_420035.1">
    <property type="nucleotide sequence ID" value="NC_002696.2"/>
</dbReference>
<dbReference type="RefSeq" id="WP_010919103.1">
    <property type="nucleotide sequence ID" value="NC_002696.2"/>
</dbReference>
<dbReference type="SMR" id="P58056"/>
<dbReference type="STRING" id="190650.CC_1221"/>
<dbReference type="EnsemblBacteria" id="AAK23203">
    <property type="protein sequence ID" value="AAK23203"/>
    <property type="gene ID" value="CC_1221"/>
</dbReference>
<dbReference type="KEGG" id="ccr:CC_1221"/>
<dbReference type="PATRIC" id="fig|190650.5.peg.1246"/>
<dbReference type="eggNOG" id="COG0061">
    <property type="taxonomic scope" value="Bacteria"/>
</dbReference>
<dbReference type="HOGENOM" id="CLU_073319_0_0_5"/>
<dbReference type="BioCyc" id="CAULO:CC1221-MONOMER"/>
<dbReference type="Proteomes" id="UP000001816">
    <property type="component" value="Chromosome"/>
</dbReference>
<dbReference type="GO" id="GO:0005737">
    <property type="term" value="C:cytoplasm"/>
    <property type="evidence" value="ECO:0007669"/>
    <property type="project" value="UniProtKB-SubCell"/>
</dbReference>
<dbReference type="GO" id="GO:0005524">
    <property type="term" value="F:ATP binding"/>
    <property type="evidence" value="ECO:0007669"/>
    <property type="project" value="UniProtKB-KW"/>
</dbReference>
<dbReference type="GO" id="GO:0046872">
    <property type="term" value="F:metal ion binding"/>
    <property type="evidence" value="ECO:0007669"/>
    <property type="project" value="UniProtKB-UniRule"/>
</dbReference>
<dbReference type="GO" id="GO:0051287">
    <property type="term" value="F:NAD binding"/>
    <property type="evidence" value="ECO:0007669"/>
    <property type="project" value="UniProtKB-ARBA"/>
</dbReference>
<dbReference type="GO" id="GO:0003951">
    <property type="term" value="F:NAD+ kinase activity"/>
    <property type="evidence" value="ECO:0007669"/>
    <property type="project" value="UniProtKB-UniRule"/>
</dbReference>
<dbReference type="GO" id="GO:0019674">
    <property type="term" value="P:NAD metabolic process"/>
    <property type="evidence" value="ECO:0007669"/>
    <property type="project" value="InterPro"/>
</dbReference>
<dbReference type="GO" id="GO:0006741">
    <property type="term" value="P:NADP biosynthetic process"/>
    <property type="evidence" value="ECO:0007669"/>
    <property type="project" value="UniProtKB-UniRule"/>
</dbReference>
<dbReference type="Gene3D" id="3.40.50.10330">
    <property type="entry name" value="Probable inorganic polyphosphate/atp-NAD kinase, domain 1"/>
    <property type="match status" value="1"/>
</dbReference>
<dbReference type="Gene3D" id="2.60.200.30">
    <property type="entry name" value="Probable inorganic polyphosphate/atp-NAD kinase, domain 2"/>
    <property type="match status" value="1"/>
</dbReference>
<dbReference type="HAMAP" id="MF_00361">
    <property type="entry name" value="NAD_kinase"/>
    <property type="match status" value="1"/>
</dbReference>
<dbReference type="InterPro" id="IPR017438">
    <property type="entry name" value="ATP-NAD_kinase_N"/>
</dbReference>
<dbReference type="InterPro" id="IPR017437">
    <property type="entry name" value="ATP-NAD_kinase_PpnK-typ_C"/>
</dbReference>
<dbReference type="InterPro" id="IPR016064">
    <property type="entry name" value="NAD/diacylglycerol_kinase_sf"/>
</dbReference>
<dbReference type="InterPro" id="IPR002504">
    <property type="entry name" value="NADK"/>
</dbReference>
<dbReference type="NCBIfam" id="NF003406">
    <property type="entry name" value="PRK04761.1"/>
    <property type="match status" value="1"/>
</dbReference>
<dbReference type="PANTHER" id="PTHR20275">
    <property type="entry name" value="NAD KINASE"/>
    <property type="match status" value="1"/>
</dbReference>
<dbReference type="PANTHER" id="PTHR20275:SF0">
    <property type="entry name" value="NAD KINASE"/>
    <property type="match status" value="1"/>
</dbReference>
<dbReference type="Pfam" id="PF01513">
    <property type="entry name" value="NAD_kinase"/>
    <property type="match status" value="1"/>
</dbReference>
<dbReference type="Pfam" id="PF20143">
    <property type="entry name" value="NAD_kinase_C"/>
    <property type="match status" value="1"/>
</dbReference>
<dbReference type="SUPFAM" id="SSF111331">
    <property type="entry name" value="NAD kinase/diacylglycerol kinase-like"/>
    <property type="match status" value="1"/>
</dbReference>
<reference key="1">
    <citation type="journal article" date="2001" name="Proc. Natl. Acad. Sci. U.S.A.">
        <title>Complete genome sequence of Caulobacter crescentus.</title>
        <authorList>
            <person name="Nierman W.C."/>
            <person name="Feldblyum T.V."/>
            <person name="Laub M.T."/>
            <person name="Paulsen I.T."/>
            <person name="Nelson K.E."/>
            <person name="Eisen J.A."/>
            <person name="Heidelberg J.F."/>
            <person name="Alley M.R.K."/>
            <person name="Ohta N."/>
            <person name="Maddock J.R."/>
            <person name="Potocka I."/>
            <person name="Nelson W.C."/>
            <person name="Newton A."/>
            <person name="Stephens C."/>
            <person name="Phadke N.D."/>
            <person name="Ely B."/>
            <person name="DeBoy R.T."/>
            <person name="Dodson R.J."/>
            <person name="Durkin A.S."/>
            <person name="Gwinn M.L."/>
            <person name="Haft D.H."/>
            <person name="Kolonay J.F."/>
            <person name="Smit J."/>
            <person name="Craven M.B."/>
            <person name="Khouri H.M."/>
            <person name="Shetty J."/>
            <person name="Berry K.J."/>
            <person name="Utterback T.R."/>
            <person name="Tran K."/>
            <person name="Wolf A.M."/>
            <person name="Vamathevan J.J."/>
            <person name="Ermolaeva M.D."/>
            <person name="White O."/>
            <person name="Salzberg S.L."/>
            <person name="Venter J.C."/>
            <person name="Shapiro L."/>
            <person name="Fraser C.M."/>
        </authorList>
    </citation>
    <scope>NUCLEOTIDE SEQUENCE [LARGE SCALE GENOMIC DNA]</scope>
    <source>
        <strain>ATCC 19089 / CIP 103742 / CB 15</strain>
    </source>
</reference>
<organism>
    <name type="scientific">Caulobacter vibrioides (strain ATCC 19089 / CIP 103742 / CB 15)</name>
    <name type="common">Caulobacter crescentus</name>
    <dbReference type="NCBI Taxonomy" id="190650"/>
    <lineage>
        <taxon>Bacteria</taxon>
        <taxon>Pseudomonadati</taxon>
        <taxon>Pseudomonadota</taxon>
        <taxon>Alphaproteobacteria</taxon>
        <taxon>Caulobacterales</taxon>
        <taxon>Caulobacteraceae</taxon>
        <taxon>Caulobacter</taxon>
    </lineage>
</organism>
<protein>
    <recommendedName>
        <fullName evidence="1">NAD kinase</fullName>
        <ecNumber evidence="1">2.7.1.23</ecNumber>
    </recommendedName>
    <alternativeName>
        <fullName evidence="1">ATP-dependent NAD kinase</fullName>
    </alternativeName>
</protein>